<dbReference type="EMBL" id="DS231719">
    <property type="protein sequence ID" value="KNB16600.1"/>
    <property type="molecule type" value="Genomic_DNA"/>
</dbReference>
<dbReference type="EMBL" id="DS231722">
    <property type="protein sequence ID" value="KNB17555.1"/>
    <property type="molecule type" value="Genomic_DNA"/>
</dbReference>
<dbReference type="RefSeq" id="XP_018254645.1">
    <property type="nucleotide sequence ID" value="XM_018394481.1"/>
</dbReference>
<dbReference type="RefSeq" id="XP_018255600.1">
    <property type="nucleotide sequence ID" value="XM_018395135.1"/>
</dbReference>
<dbReference type="GeneID" id="28955580"/>
<dbReference type="GeneID" id="28956156"/>
<dbReference type="KEGG" id="fox:FOXG_14422"/>
<dbReference type="KEGG" id="fox:FOXG_15059"/>
<dbReference type="VEuPathDB" id="FungiDB:FOXG_14422"/>
<dbReference type="VEuPathDB" id="FungiDB:FOXG_15059"/>
<dbReference type="OrthoDB" id="67972at110618"/>
<dbReference type="Proteomes" id="UP000009097">
    <property type="component" value="Unassembled WGS sequence"/>
</dbReference>
<dbReference type="GO" id="GO:0005634">
    <property type="term" value="C:nucleus"/>
    <property type="evidence" value="ECO:0007669"/>
    <property type="project" value="UniProtKB-SubCell"/>
</dbReference>
<dbReference type="GO" id="GO:0003677">
    <property type="term" value="F:DNA binding"/>
    <property type="evidence" value="ECO:0007669"/>
    <property type="project" value="InterPro"/>
</dbReference>
<dbReference type="GO" id="GO:0000981">
    <property type="term" value="F:DNA-binding transcription factor activity, RNA polymerase II-specific"/>
    <property type="evidence" value="ECO:0007669"/>
    <property type="project" value="InterPro"/>
</dbReference>
<dbReference type="GO" id="GO:0008270">
    <property type="term" value="F:zinc ion binding"/>
    <property type="evidence" value="ECO:0007669"/>
    <property type="project" value="InterPro"/>
</dbReference>
<dbReference type="GO" id="GO:0006351">
    <property type="term" value="P:DNA-templated transcription"/>
    <property type="evidence" value="ECO:0007669"/>
    <property type="project" value="InterPro"/>
</dbReference>
<dbReference type="CDD" id="cd12148">
    <property type="entry name" value="fungal_TF_MHR"/>
    <property type="match status" value="1"/>
</dbReference>
<dbReference type="CDD" id="cd00067">
    <property type="entry name" value="GAL4"/>
    <property type="match status" value="1"/>
</dbReference>
<dbReference type="Gene3D" id="4.10.240.10">
    <property type="entry name" value="Zn(2)-C6 fungal-type DNA-binding domain"/>
    <property type="match status" value="1"/>
</dbReference>
<dbReference type="InterPro" id="IPR050815">
    <property type="entry name" value="TF_fung"/>
</dbReference>
<dbReference type="InterPro" id="IPR007219">
    <property type="entry name" value="Transcription_factor_dom_fun"/>
</dbReference>
<dbReference type="InterPro" id="IPR036864">
    <property type="entry name" value="Zn2-C6_fun-type_DNA-bd_sf"/>
</dbReference>
<dbReference type="InterPro" id="IPR001138">
    <property type="entry name" value="Zn2Cys6_DnaBD"/>
</dbReference>
<dbReference type="PANTHER" id="PTHR47338:SF27">
    <property type="entry name" value="ZN(II)2CYS6 TRANSCRIPTION FACTOR (EUROFUNG)"/>
    <property type="match status" value="1"/>
</dbReference>
<dbReference type="PANTHER" id="PTHR47338">
    <property type="entry name" value="ZN(II)2CYS6 TRANSCRIPTION FACTOR (EUROFUNG)-RELATED"/>
    <property type="match status" value="1"/>
</dbReference>
<dbReference type="Pfam" id="PF04082">
    <property type="entry name" value="Fungal_trans"/>
    <property type="match status" value="1"/>
</dbReference>
<dbReference type="Pfam" id="PF00172">
    <property type="entry name" value="Zn_clus"/>
    <property type="match status" value="1"/>
</dbReference>
<dbReference type="PRINTS" id="PR00755">
    <property type="entry name" value="AFLATOXINBRP"/>
</dbReference>
<dbReference type="SMART" id="SM00906">
    <property type="entry name" value="Fungal_trans"/>
    <property type="match status" value="1"/>
</dbReference>
<dbReference type="SMART" id="SM00066">
    <property type="entry name" value="GAL4"/>
    <property type="match status" value="1"/>
</dbReference>
<dbReference type="SUPFAM" id="SSF57701">
    <property type="entry name" value="Zn2/Cys6 DNA-binding domain"/>
    <property type="match status" value="1"/>
</dbReference>
<dbReference type="PROSITE" id="PS00463">
    <property type="entry name" value="ZN2_CY6_FUNGAL_1"/>
    <property type="match status" value="1"/>
</dbReference>
<dbReference type="PROSITE" id="PS50048">
    <property type="entry name" value="ZN2_CY6_FUNGAL_2"/>
    <property type="match status" value="1"/>
</dbReference>
<accession>A0A0J9W3S9</accession>
<feature type="chain" id="PRO_0000462483" description="Zn(2)-C6 fungal-type transcription factor FTF1a">
    <location>
        <begin position="1"/>
        <end position="1072"/>
    </location>
</feature>
<feature type="DNA-binding region" description="Zn(2)-C6 fungal-type" evidence="1">
    <location>
        <begin position="178"/>
        <end position="205"/>
    </location>
</feature>
<reference key="1">
    <citation type="journal article" date="2010" name="Nature">
        <title>Comparative genomics reveals mobile pathogenicity chromosomes in Fusarium.</title>
        <authorList>
            <person name="Ma L.-J."/>
            <person name="van der Does H.C."/>
            <person name="Borkovich K.A."/>
            <person name="Coleman J.J."/>
            <person name="Daboussi M.-J."/>
            <person name="Di Pietro A."/>
            <person name="Dufresne M."/>
            <person name="Freitag M."/>
            <person name="Grabherr M."/>
            <person name="Henrissat B."/>
            <person name="Houterman P.M."/>
            <person name="Kang S."/>
            <person name="Shim W.-B."/>
            <person name="Woloshuk C."/>
            <person name="Xie X."/>
            <person name="Xu J.-R."/>
            <person name="Antoniw J."/>
            <person name="Baker S.E."/>
            <person name="Bluhm B.H."/>
            <person name="Breakspear A."/>
            <person name="Brown D.W."/>
            <person name="Butchko R.A.E."/>
            <person name="Chapman S."/>
            <person name="Coulson R."/>
            <person name="Coutinho P.M."/>
            <person name="Danchin E.G.J."/>
            <person name="Diener A."/>
            <person name="Gale L.R."/>
            <person name="Gardiner D.M."/>
            <person name="Goff S."/>
            <person name="Hammond-Kosack K.E."/>
            <person name="Hilburn K."/>
            <person name="Hua-Van A."/>
            <person name="Jonkers W."/>
            <person name="Kazan K."/>
            <person name="Kodira C.D."/>
            <person name="Koehrsen M."/>
            <person name="Kumar L."/>
            <person name="Lee Y.-H."/>
            <person name="Li L."/>
            <person name="Manners J.M."/>
            <person name="Miranda-Saavedra D."/>
            <person name="Mukherjee M."/>
            <person name="Park G."/>
            <person name="Park J."/>
            <person name="Park S.-Y."/>
            <person name="Proctor R.H."/>
            <person name="Regev A."/>
            <person name="Ruiz-Roldan M.C."/>
            <person name="Sain D."/>
            <person name="Sakthikumar S."/>
            <person name="Sykes S."/>
            <person name="Schwartz D.C."/>
            <person name="Turgeon B.G."/>
            <person name="Wapinski I."/>
            <person name="Yoder O."/>
            <person name="Young S."/>
            <person name="Zeng Q."/>
            <person name="Zhou S."/>
            <person name="Galagan J."/>
            <person name="Cuomo C.A."/>
            <person name="Kistler H.C."/>
            <person name="Rep M."/>
        </authorList>
    </citation>
    <scope>NUCLEOTIDE SEQUENCE [LARGE SCALE GENOMIC DNA]</scope>
    <source>
        <strain>4287 / CBS 123668 / FGSC 9935 / NRRL 34936</strain>
    </source>
</reference>
<reference key="2">
    <citation type="journal article" date="2007" name="Fungal Genet. Biol.">
        <title>The gene coding for a new transcription factor (ftf1) of Fusarium oxysporum is only expressed during infection of common bean.</title>
        <authorList>
            <person name="Ramos B."/>
            <person name="Alves-Santos F.M."/>
            <person name="Garcia-Sanchez M.A."/>
            <person name="Martin-Rodrigues N."/>
            <person name="Eslava A.P."/>
            <person name="Diaz-Minguez J.M."/>
        </authorList>
    </citation>
    <scope>FUNCTION</scope>
    <scope>INDUCTION</scope>
</reference>
<reference key="3">
    <citation type="journal article" date="2016" name="Mol. Plant Pathol.">
        <title>The FTF gene family regulates virulence and expression of SIX effectors in Fusarium oxysporum.</title>
        <authorList>
            <person name="Nino-Sanchez J."/>
            <person name="Casado-Del Castillo V."/>
            <person name="Tello V."/>
            <person name="De Vega-Bartol J.J."/>
            <person name="Ramos B."/>
            <person name="Sukno S.A."/>
            <person name="Diaz Minguez J.M."/>
        </authorList>
    </citation>
    <scope>FUNCTION</scope>
</reference>
<proteinExistence type="evidence at transcript level"/>
<protein>
    <recommendedName>
        <fullName evidence="4">Zn(2)-C6 fungal-type transcription factor FTF1a</fullName>
    </recommendedName>
    <alternativeName>
        <fullName evidence="4">Fusarium transcription factor 1a</fullName>
    </alternativeName>
</protein>
<sequence length="1072" mass="117388">MSGRAVSNPQHAQQSFDSGPQLYRDVPELHAVPSPSHSALMDSTHFDDFAFAYHGLPDQSSLVSLADHTHTSQSPTAFPQHQAMSGLAHSGLPFGTLPTGNRSQSMEGSELPPPDRTSPASNALEDPTTDEFGLASRNRADGTDLGGKHKEDKVDATPAWSELKTKAGKERKRLPLACMACRRKKIRCSGEKPACKHCLRSRILCVYKVTTRKAAPRTGYIAMLDKPLKRMEERIIKVIPKSDQEVASSVTRAVVKPVIPGTVPSSKPTKKRGAEEVFGPDLDAWAKAPSKPKIEGDDRPSCLQVQEAEENMLQHEGAEALPSKEIQEHLAEVFFDNIYGQSYHLLHKPSYMRKLKNGTLPPVLVLTVCAVAARFTSNPLVSSSGPELLRGEEWASHAQDICTRRYEWPNLTILTCLLILGLHEFGTCQSGRSWALGGHAIRMAFALQLHKDLEYDPSGRHSTKTQLSFIDREIRRRIMWACFLMDRFNSSGTDRPMFIREDTIQIPLPVKEKYFQFDLPAPTEMLDGQVPHPVSPNDGQIADARENMGVAAFLIRAIALWGRIITYLSQGGKDLDPNPMWEDESHYVKHLNDVVNLEASLPLSLKYSAENLEVHKTENTASQFLFMHICLQHNILFVSRAAMSARKQRGVHDDFFSEASKRTFDAANRISELLREAEQLRCFVSAPFAGYCAFSSTTVHILGIISRNPSMKLAAQANLTTNVKYLHKMKKYWGMFHWMVENVHTQYRNALDAMRAGANVQERATQSSFLQYGDWFNCYPHGLSDAEFMDPATLKRKDSGADGVLEAKSELQSVEEYFSTLPTPRSAENKDTIRAAAPKRKQSAKKQTGMPAQPGQHLDSLQSTDADAVSQERKFSGGLGLQTTGAADFNPLAASNPQNPAFSTTMPPTSPANMTAFAHHAYTPTFFPPELLAMNFGQGSNGNIDPLDRQLVYGGYSMDASTGLGDGQDMTSGLDWDTVASGAQPDGGLQGRRSNVKAGMHGQSAGMADGAGLSGLEASSAWFMPFNMEPPDIGQDPGFNMGGIDPFAGVFGGGGSGLATPNALGGLQQQGP</sequence>
<comment type="function">
    <text evidence="2 3">Zn(2)-C6 fungal-type transcription factor that has a role in the establishment of the fungus within the plant and/or the progress of the disease (PubMed:17462924, PubMed:26817616). Regulates the expression of virulence factors such as SIX1 and SIX6 (PubMed:26817616).</text>
</comment>
<comment type="subcellular location">
    <subcellularLocation>
        <location evidence="1">Nucleus</location>
    </subcellularLocation>
</comment>
<comment type="induction">
    <text evidence="2">Exclusively expressed during infection of common bean.</text>
</comment>
<comment type="miscellaneous">
    <text evidence="2">Multiple copies of the gene are present in highly virulent fusarium oxysporum strains.</text>
</comment>
<organism>
    <name type="scientific">Fusarium oxysporum f. sp. lycopersici (strain 4287 / CBS 123668 / FGSC 9935 / NRRL 34936)</name>
    <name type="common">Fusarium vascular wilt of tomato</name>
    <dbReference type="NCBI Taxonomy" id="426428"/>
    <lineage>
        <taxon>Eukaryota</taxon>
        <taxon>Fungi</taxon>
        <taxon>Dikarya</taxon>
        <taxon>Ascomycota</taxon>
        <taxon>Pezizomycotina</taxon>
        <taxon>Sordariomycetes</taxon>
        <taxon>Hypocreomycetidae</taxon>
        <taxon>Hypocreales</taxon>
        <taxon>Nectriaceae</taxon>
        <taxon>Fusarium</taxon>
        <taxon>Fusarium oxysporum species complex</taxon>
    </lineage>
</organism>
<name>TF1A3_FUSO4</name>
<keyword id="KW-0479">Metal-binding</keyword>
<keyword id="KW-0539">Nucleus</keyword>
<keyword id="KW-1185">Reference proteome</keyword>
<keyword id="KW-0804">Transcription</keyword>
<keyword id="KW-0805">Transcription regulation</keyword>
<keyword id="KW-0843">Virulence</keyword>
<evidence type="ECO:0000255" key="1">
    <source>
        <dbReference type="PROSITE-ProRule" id="PRU00227"/>
    </source>
</evidence>
<evidence type="ECO:0000269" key="2">
    <source>
    </source>
</evidence>
<evidence type="ECO:0000269" key="3">
    <source>
    </source>
</evidence>
<evidence type="ECO:0000303" key="4">
    <source>
    </source>
</evidence>
<gene>
    <name evidence="4" type="primary">FTF1a</name>
    <name type="ORF">FOXG_14422</name>
    <name type="ORF">FOXG_15059</name>
</gene>